<evidence type="ECO:0000250" key="1"/>
<evidence type="ECO:0000250" key="2">
    <source>
        <dbReference type="UniProtKB" id="P08648"/>
    </source>
</evidence>
<evidence type="ECO:0000255" key="3"/>
<evidence type="ECO:0000255" key="4">
    <source>
        <dbReference type="PROSITE-ProRule" id="PRU00803"/>
    </source>
</evidence>
<evidence type="ECO:0000269" key="5">
    <source>
    </source>
</evidence>
<evidence type="ECO:0000269" key="6">
    <source>
    </source>
</evidence>
<evidence type="ECO:0000269" key="7">
    <source>
    </source>
</evidence>
<evidence type="ECO:0000269" key="8">
    <source>
    </source>
</evidence>
<evidence type="ECO:0000269" key="9">
    <source>
    </source>
</evidence>
<evidence type="ECO:0000269" key="10">
    <source>
    </source>
</evidence>
<evidence type="ECO:0000269" key="11">
    <source>
    </source>
</evidence>
<evidence type="ECO:0000269" key="12">
    <source>
    </source>
</evidence>
<evidence type="ECO:0000269" key="13">
    <source>
    </source>
</evidence>
<evidence type="ECO:0000269" key="14">
    <source>
    </source>
</evidence>
<evidence type="ECO:0000269" key="15">
    <source>
    </source>
</evidence>
<evidence type="ECO:0000269" key="16">
    <source>
    </source>
</evidence>
<evidence type="ECO:0000269" key="17">
    <source>
    </source>
</evidence>
<evidence type="ECO:0000269" key="18">
    <source>
    </source>
</evidence>
<evidence type="ECO:0000269" key="19">
    <source>
    </source>
</evidence>
<evidence type="ECO:0000269" key="20">
    <source ref="5"/>
</evidence>
<evidence type="ECO:0000303" key="21">
    <source>
    </source>
</evidence>
<evidence type="ECO:0000305" key="22"/>
<evidence type="ECO:0007744" key="23">
    <source>
    </source>
</evidence>
<evidence type="ECO:0007744" key="24">
    <source>
    </source>
</evidence>
<evidence type="ECO:0007829" key="25">
    <source>
        <dbReference type="PDB" id="3V4P"/>
    </source>
</evidence>
<evidence type="ECO:0007829" key="26">
    <source>
        <dbReference type="PDB" id="3V4V"/>
    </source>
</evidence>
<keyword id="KW-0002">3D-structure</keyword>
<keyword id="KW-0025">Alternative splicing</keyword>
<keyword id="KW-0106">Calcium</keyword>
<keyword id="KW-0130">Cell adhesion</keyword>
<keyword id="KW-0903">Direct protein sequencing</keyword>
<keyword id="KW-1015">Disulfide bond</keyword>
<keyword id="KW-0325">Glycoprotein</keyword>
<keyword id="KW-0401">Integrin</keyword>
<keyword id="KW-0472">Membrane</keyword>
<keyword id="KW-0479">Metal-binding</keyword>
<keyword id="KW-0597">Phosphoprotein</keyword>
<keyword id="KW-1267">Proteomics identification</keyword>
<keyword id="KW-0675">Receptor</keyword>
<keyword id="KW-1185">Reference proteome</keyword>
<keyword id="KW-0677">Repeat</keyword>
<keyword id="KW-0732">Signal</keyword>
<keyword id="KW-0812">Transmembrane</keyword>
<keyword id="KW-1133">Transmembrane helix</keyword>
<comment type="function">
    <text evidence="10 11 13 14 16">Integrins alpha-4/beta-1 (VLA-4) and alpha-4/beta-7 are receptors for fibronectin. They recognize one or more domains within the alternatively spliced CS-1 and CS-5 regions of fibronectin. They are also receptors for VCAM1. Integrin alpha-4/beta-1 recognizes the sequence Q-I-D-S in VCAM1. Integrin alpha-4/beta-7 is also a receptor for MADCAM1. It recognizes the sequence L-D-T in MADCAM1. On activated endothelial cells integrin VLA-4 triggers homotypic aggregation for most VLA-4-positive leukocyte cell lines. It may also participate in cytolytic T-cell interactions with target cells. ITGA4:ITGB1 binds to fractalkine (CX3CL1) and may act as its coreceptor in CX3CR1-dependent fractalkine signaling (PubMed:23125415). ITGA4:ITGB1 binds to PLA2G2A via a site (site 2) which is distinct from the classical ligand-binding site (site 1) and this induces integrin conformational changes and enhanced ligand binding to site 1 (PubMed:18635536, PubMed:25398877). Integrin ITGA4:ITGB1 represses PRKCA-mediated L-type voltage-gated channel Ca(2+) influx and ROCK-mediated calcium sensitivity in vascular smooth muscle cells via its interaction with SVEP1, thereby inhibiting vasocontraction (PubMed:35802072).</text>
</comment>
<comment type="subunit">
    <text evidence="5 7 8 11 13 16 17 19">Heterodimer of an alpha and a beta subunit. The alpha subunit can sometimes be cleaved into two non-covalently associated fragments. Alpha-4 associates with either beta-1 or beta-7. Alpha-4 interacts with PXN, LPXN, and TGFB1I1/HIC5. Interacts with CSPG4 through CSPG4 chondroitin sulfate glycosaminoglycan. Interacts with JAML; integrin alpha-4/beta-1 may regulate leukocyte to endothelial cells adhesion by controlling JAML homodimerization. ITGA4:ITGB1 is found in a ternary complex with CX3CR1 and CX3CL1 (PubMed:23125415). Interacts with MDK (PubMed:15466886). ITGA4:ITGB1 interacts with MDK; this interaction mediates MDK-induced osteoblast cells migration through PXN phosphorylation (PubMed:15466886). Integrin ITGA4:ITGB1 interacts with SVEP1 (via Sushi domain 21); thereby inhibits Ca(2+) intracellular signaling and as a result represses vasocontraction (PubMed:35802072). ITGA4:ITGB1 interacts with SELP (PubMed:37184585). ITGA4:ITGB1 interacts with BCAM (PubMed:17158232).</text>
</comment>
<comment type="interaction">
    <interactant intactId="EBI-703044">
        <id>P13612</id>
    </interactant>
    <interactant intactId="EBI-7358775">
        <id>Q8IZP0-2</id>
        <label>ABI1</label>
    </interactant>
    <organismsDiffer>false</organismsDiffer>
    <experiments>2</experiments>
</comment>
<comment type="interaction">
    <interactant intactId="EBI-703044">
        <id>P13612</id>
    </interactant>
    <interactant intactId="EBI-703066">
        <id>P05556</id>
        <label>ITGB1</label>
    </interactant>
    <organismsDiffer>false</organismsDiffer>
    <experiments>4</experiments>
</comment>
<comment type="interaction">
    <interactant intactId="EBI-703044">
        <id>P13612</id>
    </interactant>
    <interactant intactId="EBI-702932">
        <id>P26010</id>
        <label>ITGB7</label>
    </interactant>
    <organismsDiffer>false</organismsDiffer>
    <experiments>6</experiments>
</comment>
<comment type="interaction">
    <interactant intactId="EBI-703044">
        <id>P13612</id>
    </interactant>
    <interactant intactId="EBI-702209">
        <id>P49023</id>
        <label>PXN</label>
    </interactant>
    <organismsDiffer>false</organismsDiffer>
    <experiments>5</experiments>
</comment>
<comment type="interaction">
    <interactant intactId="EBI-703044">
        <id>P13612</id>
    </interactant>
    <interactant intactId="EBI-297693">
        <id>P84092</id>
        <label>Ap2m1</label>
    </interactant>
    <organismsDiffer>true</organismsDiffer>
    <experiments>2</experiments>
</comment>
<comment type="subcellular location">
    <subcellularLocation>
        <location evidence="3">Membrane</location>
        <topology evidence="3">Single-pass type I membrane protein</topology>
    </subcellularLocation>
</comment>
<comment type="alternative products">
    <event type="alternative splicing"/>
    <isoform>
        <id>P13612-1</id>
        <name>1</name>
        <sequence type="displayed"/>
    </isoform>
    <isoform>
        <id>P13612-2</id>
        <name>2</name>
        <sequence type="described" ref="VSP_056612 VSP_056613"/>
    </isoform>
</comment>
<comment type="tissue specificity">
    <text evidence="16">Expressed in vascular smooth muscle cells (at protein level).</text>
</comment>
<comment type="domain">
    <text evidence="19">The SG1 motif is involved in binding to chondroitin sulfate glycosaminoglycan and cell adhesion.</text>
</comment>
<comment type="PTM">
    <text evidence="6">Phosphorylation on Ser-1027 inhibits PXN binding.</text>
</comment>
<comment type="similarity">
    <text evidence="22">Belongs to the integrin alpha chain family.</text>
</comment>
<comment type="sequence caution" evidence="22">
    <conflict type="frameshift">
        <sequence resource="EMBL-CDS" id="AAB59613"/>
    </conflict>
</comment>
<comment type="sequence caution" evidence="22">
    <conflict type="frameshift">
        <sequence resource="EMBL-CDS" id="CAA34852"/>
    </conflict>
</comment>
<accession>P13612</accession>
<accession>D3DPG4</accession>
<accession>Q7Z4L6</accession>
<name>ITA4_HUMAN</name>
<gene>
    <name type="primary">ITGA4</name>
    <name type="synonym">CD49D</name>
</gene>
<feature type="signal peptide" evidence="15">
    <location>
        <begin position="1"/>
        <end position="33"/>
    </location>
</feature>
<feature type="chain" id="PRO_0000016244" description="Integrin alpha-4">
    <location>
        <begin position="34"/>
        <end position="1032"/>
    </location>
</feature>
<feature type="topological domain" description="Extracellular" evidence="3">
    <location>
        <begin position="35"/>
        <end position="977"/>
    </location>
</feature>
<feature type="transmembrane region" description="Helical" evidence="3">
    <location>
        <begin position="978"/>
        <end position="1001"/>
    </location>
</feature>
<feature type="topological domain" description="Cytoplasmic" evidence="3">
    <location>
        <begin position="1002"/>
        <end position="1032"/>
    </location>
</feature>
<feature type="repeat" description="FG-GAP 1" evidence="4">
    <location>
        <begin position="35"/>
        <end position="100"/>
    </location>
</feature>
<feature type="repeat" description="FG-GAP 2" evidence="4">
    <location>
        <begin position="110"/>
        <end position="177"/>
    </location>
</feature>
<feature type="repeat" description="FG-GAP 3" evidence="4">
    <location>
        <begin position="185"/>
        <end position="237"/>
    </location>
</feature>
<feature type="repeat" description="FG-GAP 4" evidence="4">
    <location>
        <begin position="238"/>
        <end position="291"/>
    </location>
</feature>
<feature type="repeat" description="FG-GAP 5" evidence="4">
    <location>
        <begin position="292"/>
        <end position="351"/>
    </location>
</feature>
<feature type="repeat" description="FG-GAP 6" evidence="4">
    <location>
        <begin position="355"/>
        <end position="412"/>
    </location>
</feature>
<feature type="repeat" description="FG-GAP 7" evidence="4">
    <location>
        <begin position="416"/>
        <end position="478"/>
    </location>
</feature>
<feature type="short sequence motif" description="SG1">
    <location>
        <begin position="606"/>
        <end position="616"/>
    </location>
</feature>
<feature type="short sequence motif" description="GFFKR motif">
    <location>
        <begin position="1003"/>
        <end position="1007"/>
    </location>
</feature>
<feature type="binding site" evidence="2">
    <location>
        <position position="314"/>
    </location>
    <ligand>
        <name>Ca(2+)</name>
        <dbReference type="ChEBI" id="CHEBI:29108"/>
        <label>1</label>
    </ligand>
</feature>
<feature type="binding site" evidence="2">
    <location>
        <position position="316"/>
    </location>
    <ligand>
        <name>Ca(2+)</name>
        <dbReference type="ChEBI" id="CHEBI:29108"/>
        <label>1</label>
    </ligand>
</feature>
<feature type="binding site" evidence="2">
    <location>
        <position position="318"/>
    </location>
    <ligand>
        <name>Ca(2+)</name>
        <dbReference type="ChEBI" id="CHEBI:29108"/>
        <label>1</label>
    </ligand>
</feature>
<feature type="binding site" evidence="2">
    <location>
        <position position="322"/>
    </location>
    <ligand>
        <name>Ca(2+)</name>
        <dbReference type="ChEBI" id="CHEBI:29108"/>
        <label>1</label>
    </ligand>
</feature>
<feature type="binding site" evidence="2">
    <location>
        <position position="377"/>
    </location>
    <ligand>
        <name>Ca(2+)</name>
        <dbReference type="ChEBI" id="CHEBI:29108"/>
        <label>2</label>
    </ligand>
</feature>
<feature type="binding site" evidence="2">
    <location>
        <position position="379"/>
    </location>
    <ligand>
        <name>Ca(2+)</name>
        <dbReference type="ChEBI" id="CHEBI:29108"/>
        <label>2</label>
    </ligand>
</feature>
<feature type="binding site" evidence="2">
    <location>
        <position position="381"/>
    </location>
    <ligand>
        <name>Ca(2+)</name>
        <dbReference type="ChEBI" id="CHEBI:29108"/>
        <label>2</label>
    </ligand>
</feature>
<feature type="binding site" evidence="2">
    <location>
        <position position="385"/>
    </location>
    <ligand>
        <name>Ca(2+)</name>
        <dbReference type="ChEBI" id="CHEBI:29108"/>
        <label>2</label>
    </ligand>
</feature>
<feature type="binding site" evidence="2">
    <location>
        <position position="439"/>
    </location>
    <ligand>
        <name>Ca(2+)</name>
        <dbReference type="ChEBI" id="CHEBI:29108"/>
        <label>3</label>
    </ligand>
</feature>
<feature type="binding site" evidence="2">
    <location>
        <position position="441"/>
    </location>
    <ligand>
        <name>Ca(2+)</name>
        <dbReference type="ChEBI" id="CHEBI:29108"/>
        <label>3</label>
    </ligand>
</feature>
<feature type="binding site" evidence="2">
    <location>
        <position position="443"/>
    </location>
    <ligand>
        <name>Ca(2+)</name>
        <dbReference type="ChEBI" id="CHEBI:29108"/>
        <label>3</label>
    </ligand>
</feature>
<feature type="binding site" evidence="2">
    <location>
        <position position="445"/>
    </location>
    <ligand>
        <name>Ca(2+)</name>
        <dbReference type="ChEBI" id="CHEBI:29108"/>
        <label>3</label>
    </ligand>
</feature>
<feature type="binding site" evidence="2">
    <location>
        <position position="447"/>
    </location>
    <ligand>
        <name>Ca(2+)</name>
        <dbReference type="ChEBI" id="CHEBI:29108"/>
        <label>3</label>
    </ligand>
</feature>
<feature type="site" description="Cleavage">
    <location>
        <begin position="591"/>
        <end position="592"/>
    </location>
</feature>
<feature type="modified residue" description="Phosphoserine" evidence="6 23 24">
    <location>
        <position position="1021"/>
    </location>
</feature>
<feature type="glycosylation site" description="N-linked (GlcNAc...) asparagine" evidence="3">
    <location>
        <position position="79"/>
    </location>
</feature>
<feature type="glycosylation site" description="N-linked (GlcNAc...) asparagine" evidence="3">
    <location>
        <position position="138"/>
    </location>
</feature>
<feature type="glycosylation site" description="N-linked (GlcNAc...) asparagine" evidence="3">
    <location>
        <position position="229"/>
    </location>
</feature>
<feature type="glycosylation site" description="N-linked (GlcNAc...) asparagine" evidence="12">
    <location>
        <position position="480"/>
    </location>
</feature>
<feature type="glycosylation site" description="N-linked (GlcNAc...) asparagine" evidence="12">
    <location>
        <position position="518"/>
    </location>
</feature>
<feature type="glycosylation site" description="N-linked (GlcNAc...) asparagine" evidence="12">
    <location>
        <position position="538"/>
    </location>
</feature>
<feature type="glycosylation site" description="N-linked (GlcNAc...) asparagine" evidence="3">
    <location>
        <position position="626"/>
    </location>
</feature>
<feature type="glycosylation site" description="N-linked (GlcNAc...) asparagine" evidence="12">
    <location>
        <position position="645"/>
    </location>
</feature>
<feature type="glycosylation site" description="N-linked (GlcNAc...) asparagine" evidence="3">
    <location>
        <position position="660"/>
    </location>
</feature>
<feature type="glycosylation site" description="N-linked (GlcNAc...) asparagine" evidence="3">
    <location>
        <position position="806"/>
    </location>
</feature>
<feature type="glycosylation site" description="N-linked (GlcNAc...) asparagine" evidence="3">
    <location>
        <position position="821"/>
    </location>
</feature>
<feature type="disulfide bond" evidence="1">
    <location>
        <begin position="91"/>
        <end position="101"/>
    </location>
</feature>
<feature type="disulfide bond" evidence="1">
    <location>
        <begin position="144"/>
        <end position="165"/>
    </location>
</feature>
<feature type="disulfide bond" evidence="1">
    <location>
        <begin position="183"/>
        <end position="198"/>
    </location>
</feature>
<feature type="disulfide bond" evidence="1">
    <location>
        <begin position="486"/>
        <end position="495"/>
    </location>
</feature>
<feature type="disulfide bond" evidence="1">
    <location>
        <begin position="501"/>
        <end position="557"/>
    </location>
</feature>
<feature type="disulfide bond" evidence="1">
    <location>
        <begin position="622"/>
        <end position="627"/>
    </location>
</feature>
<feature type="disulfide bond" evidence="1">
    <location>
        <begin position="698"/>
        <end position="711"/>
    </location>
</feature>
<feature type="disulfide bond" evidence="1">
    <location>
        <begin position="852"/>
        <end position="890"/>
    </location>
</feature>
<feature type="disulfide bond" evidence="1">
    <location>
        <begin position="897"/>
        <end position="902"/>
    </location>
</feature>
<feature type="splice variant" id="VSP_056612" description="In isoform 2." evidence="21">
    <original>DYVKKFGENF</original>
    <variation>GSISKYRART</variation>
    <location>
        <begin position="186"/>
        <end position="195"/>
    </location>
</feature>
<feature type="splice variant" id="VSP_056613" description="In isoform 2." evidence="21">
    <location>
        <begin position="196"/>
        <end position="1032"/>
    </location>
</feature>
<feature type="sequence variant" id="VAR_047423" description="In dbSNP:rs35322532.">
    <original>S</original>
    <variation>T</variation>
    <location>
        <position position="634"/>
    </location>
</feature>
<feature type="sequence variant" id="VAR_047424" description="In dbSNP:rs1143675.">
    <original>V</original>
    <variation>A</variation>
    <location>
        <position position="824"/>
    </location>
</feature>
<feature type="sequence variant" id="VAR_003978" description="In dbSNP:rs1143676." evidence="18 20">
    <original>R</original>
    <variation>Q</variation>
    <location>
        <position position="878"/>
    </location>
</feature>
<feature type="mutagenesis site" description="Blocks binding to PLA2G2A." evidence="10">
    <original>T</original>
    <variation>A</variation>
    <location>
        <position position="222"/>
    </location>
</feature>
<feature type="mutagenesis site" description="Blocks binding to PLA2G2A." evidence="10">
    <original>G</original>
    <variation>A</variation>
    <location>
        <position position="223"/>
    </location>
</feature>
<feature type="mutagenesis site" description="Abolishes almost completely cleavage." evidence="9">
    <original>K</original>
    <variation>Q</variation>
    <location>
        <position position="590"/>
    </location>
</feature>
<feature type="mutagenesis site" description="Abolishes completely cleavage." evidence="9">
    <original>R</original>
    <variation>L</variation>
    <location>
        <position position="591"/>
    </location>
</feature>
<feature type="mutagenesis site" description="Abolishes phosphorylation." evidence="6">
    <original>S</original>
    <variation>A</variation>
    <location>
        <position position="1021"/>
    </location>
</feature>
<feature type="mutagenesis site" description="Reduces PXN binding." evidence="6">
    <original>S</original>
    <variation>D</variation>
    <location>
        <position position="1021"/>
    </location>
</feature>
<feature type="mutagenesis site" description="Disrupts PXN binding." evidence="5">
    <original>Y</original>
    <variation>A</variation>
    <location>
        <position position="1024"/>
    </location>
</feature>
<feature type="strand" evidence="26">
    <location>
        <begin position="42"/>
        <end position="45"/>
    </location>
</feature>
<feature type="strand" evidence="26">
    <location>
        <begin position="54"/>
        <end position="61"/>
    </location>
</feature>
<feature type="strand" evidence="26">
    <location>
        <begin position="64"/>
        <end position="71"/>
    </location>
</feature>
<feature type="strand" evidence="26">
    <location>
        <begin position="87"/>
        <end position="95"/>
    </location>
</feature>
<feature type="strand" evidence="26">
    <location>
        <begin position="102"/>
        <end position="104"/>
    </location>
</feature>
<feature type="strand" evidence="26">
    <location>
        <begin position="127"/>
        <end position="133"/>
    </location>
</feature>
<feature type="strand" evidence="26">
    <location>
        <begin position="141"/>
        <end position="145"/>
    </location>
</feature>
<feature type="turn" evidence="26">
    <location>
        <begin position="152"/>
        <end position="156"/>
    </location>
</feature>
<feature type="strand" evidence="26">
    <location>
        <begin position="165"/>
        <end position="168"/>
    </location>
</feature>
<feature type="helix" evidence="26">
    <location>
        <begin position="174"/>
        <end position="176"/>
    </location>
</feature>
<feature type="strand" evidence="26">
    <location>
        <begin position="178"/>
        <end position="180"/>
    </location>
</feature>
<feature type="turn" evidence="26">
    <location>
        <begin position="193"/>
        <end position="197"/>
    </location>
</feature>
<feature type="strand" evidence="26">
    <location>
        <begin position="202"/>
        <end position="206"/>
    </location>
</feature>
<feature type="strand" evidence="26">
    <location>
        <begin position="208"/>
        <end position="215"/>
    </location>
</feature>
<feature type="helix" evidence="26">
    <location>
        <begin position="218"/>
        <end position="221"/>
    </location>
</feature>
<feature type="strand" evidence="26">
    <location>
        <begin position="223"/>
        <end position="229"/>
    </location>
</feature>
<feature type="turn" evidence="26">
    <location>
        <begin position="230"/>
        <end position="233"/>
    </location>
</feature>
<feature type="strand" evidence="25">
    <location>
        <begin position="234"/>
        <end position="237"/>
    </location>
</feature>
<feature type="strand" evidence="26">
    <location>
        <begin position="253"/>
        <end position="258"/>
    </location>
</feature>
<feature type="strand" evidence="26">
    <location>
        <begin position="267"/>
        <end position="272"/>
    </location>
</feature>
<feature type="helix" evidence="26">
    <location>
        <begin position="275"/>
        <end position="277"/>
    </location>
</feature>
<feature type="strand" evidence="26">
    <location>
        <begin position="280"/>
        <end position="286"/>
    </location>
</feature>
<feature type="strand" evidence="26">
    <location>
        <begin position="288"/>
        <end position="298"/>
    </location>
</feature>
<feature type="strand" evidence="26">
    <location>
        <begin position="308"/>
        <end position="313"/>
    </location>
</feature>
<feature type="strand" evidence="26">
    <location>
        <begin position="318"/>
        <end position="320"/>
    </location>
</feature>
<feature type="strand" evidence="26">
    <location>
        <begin position="322"/>
        <end position="327"/>
    </location>
</feature>
<feature type="strand" evidence="26">
    <location>
        <begin position="332"/>
        <end position="334"/>
    </location>
</feature>
<feature type="strand" evidence="26">
    <location>
        <begin position="338"/>
        <end position="344"/>
    </location>
</feature>
<feature type="strand" evidence="26">
    <location>
        <begin position="346"/>
        <end position="349"/>
    </location>
</feature>
<feature type="strand" evidence="25">
    <location>
        <begin position="351"/>
        <end position="353"/>
    </location>
</feature>
<feature type="strand" evidence="26">
    <location>
        <begin position="381"/>
        <end position="383"/>
    </location>
</feature>
<feature type="strand" evidence="26">
    <location>
        <begin position="386"/>
        <end position="390"/>
    </location>
</feature>
<feature type="helix" evidence="26">
    <location>
        <begin position="393"/>
        <end position="396"/>
    </location>
</feature>
<feature type="strand" evidence="26">
    <location>
        <begin position="398"/>
        <end position="403"/>
    </location>
</feature>
<feature type="strand" evidence="26">
    <location>
        <begin position="415"/>
        <end position="419"/>
    </location>
</feature>
<feature type="helix" evidence="26">
    <location>
        <begin position="420"/>
        <end position="422"/>
    </location>
</feature>
<feature type="strand" evidence="26">
    <location>
        <begin position="429"/>
        <end position="438"/>
    </location>
</feature>
<feature type="strand" evidence="26">
    <location>
        <begin position="440"/>
        <end position="445"/>
    </location>
</feature>
<feature type="strand" evidence="26">
    <location>
        <begin position="447"/>
        <end position="452"/>
    </location>
</feature>
<feature type="helix" evidence="26">
    <location>
        <begin position="453"/>
        <end position="455"/>
    </location>
</feature>
<feature type="strand" evidence="26">
    <location>
        <begin position="457"/>
        <end position="461"/>
    </location>
</feature>
<feature type="strand" evidence="26">
    <location>
        <begin position="466"/>
        <end position="474"/>
    </location>
</feature>
<feature type="strand" evidence="26">
    <location>
        <begin position="495"/>
        <end position="505"/>
    </location>
</feature>
<feature type="strand" evidence="26">
    <location>
        <begin position="511"/>
        <end position="522"/>
    </location>
</feature>
<feature type="strand" evidence="26">
    <location>
        <begin position="532"/>
        <end position="534"/>
    </location>
</feature>
<feature type="strand" evidence="26">
    <location>
        <begin position="536"/>
        <end position="538"/>
    </location>
</feature>
<feature type="strand" evidence="26">
    <location>
        <begin position="542"/>
        <end position="554"/>
    </location>
</feature>
<feature type="strand" evidence="26">
    <location>
        <begin position="556"/>
        <end position="564"/>
    </location>
</feature>
<feature type="strand" evidence="26">
    <location>
        <begin position="575"/>
        <end position="583"/>
    </location>
</feature>
<feature type="strand" evidence="26">
    <location>
        <begin position="610"/>
        <end position="617"/>
    </location>
</feature>
<reference key="1">
    <citation type="journal article" date="1989" name="EMBO J.">
        <title>The primary structure of the alpha 4 subunit of VLA-4: homology to other integrins and a possible cell-cell adhesion function.</title>
        <authorList>
            <person name="Takada Y."/>
            <person name="Elices M.J."/>
            <person name="Crouse C."/>
            <person name="Hemler M.E."/>
        </authorList>
    </citation>
    <scope>NUCLEOTIDE SEQUENCE [MRNA] (ISOFORM 1)</scope>
</reference>
<reference key="2">
    <citation type="journal article" date="1992" name="Eur. J. Immunol.">
        <title>A single mRNA encodes the alpha 150 and alpha 80/70 forms of the alpha subunit of VLA4.</title>
        <authorList>
            <person name="Rubio M."/>
            <person name="Nueda A."/>
            <person name="Vara A."/>
            <person name="Corbi-Lopez A.L."/>
        </authorList>
    </citation>
    <scope>NUCLEOTIDE SEQUENCE [MRNA] (ISOFORM 1)</scope>
</reference>
<reference key="3">
    <citation type="journal article" date="1995" name="Mol. Immunol.">
        <title>Identification of two variants of the human integrin alpha 4 subunit.</title>
        <authorList>
            <person name="Szabo M.C."/>
            <person name="McIntyre B.W."/>
        </authorList>
    </citation>
    <scope>NUCLEOTIDE SEQUENCE [MRNA] (ISOFORM 1)</scope>
    <scope>VARIANT GLN-878</scope>
</reference>
<reference key="4">
    <citation type="journal article" date="2005" name="Nature">
        <title>Generation and annotation of the DNA sequences of human chromosomes 2 and 4.</title>
        <authorList>
            <person name="Hillier L.W."/>
            <person name="Graves T.A."/>
            <person name="Fulton R.S."/>
            <person name="Fulton L.A."/>
            <person name="Pepin K.H."/>
            <person name="Minx P."/>
            <person name="Wagner-McPherson C."/>
            <person name="Layman D."/>
            <person name="Wylie K."/>
            <person name="Sekhon M."/>
            <person name="Becker M.C."/>
            <person name="Fewell G.A."/>
            <person name="Delehaunty K.D."/>
            <person name="Miner T.L."/>
            <person name="Nash W.E."/>
            <person name="Kremitzki C."/>
            <person name="Oddy L."/>
            <person name="Du H."/>
            <person name="Sun H."/>
            <person name="Bradshaw-Cordum H."/>
            <person name="Ali J."/>
            <person name="Carter J."/>
            <person name="Cordes M."/>
            <person name="Harris A."/>
            <person name="Isak A."/>
            <person name="van Brunt A."/>
            <person name="Nguyen C."/>
            <person name="Du F."/>
            <person name="Courtney L."/>
            <person name="Kalicki J."/>
            <person name="Ozersky P."/>
            <person name="Abbott S."/>
            <person name="Armstrong J."/>
            <person name="Belter E.A."/>
            <person name="Caruso L."/>
            <person name="Cedroni M."/>
            <person name="Cotton M."/>
            <person name="Davidson T."/>
            <person name="Desai A."/>
            <person name="Elliott G."/>
            <person name="Erb T."/>
            <person name="Fronick C."/>
            <person name="Gaige T."/>
            <person name="Haakenson W."/>
            <person name="Haglund K."/>
            <person name="Holmes A."/>
            <person name="Harkins R."/>
            <person name="Kim K."/>
            <person name="Kruchowski S.S."/>
            <person name="Strong C.M."/>
            <person name="Grewal N."/>
            <person name="Goyea E."/>
            <person name="Hou S."/>
            <person name="Levy A."/>
            <person name="Martinka S."/>
            <person name="Mead K."/>
            <person name="McLellan M.D."/>
            <person name="Meyer R."/>
            <person name="Randall-Maher J."/>
            <person name="Tomlinson C."/>
            <person name="Dauphin-Kohlberg S."/>
            <person name="Kozlowicz-Reilly A."/>
            <person name="Shah N."/>
            <person name="Swearengen-Shahid S."/>
            <person name="Snider J."/>
            <person name="Strong J.T."/>
            <person name="Thompson J."/>
            <person name="Yoakum M."/>
            <person name="Leonard S."/>
            <person name="Pearman C."/>
            <person name="Trani L."/>
            <person name="Radionenko M."/>
            <person name="Waligorski J.E."/>
            <person name="Wang C."/>
            <person name="Rock S.M."/>
            <person name="Tin-Wollam A.-M."/>
            <person name="Maupin R."/>
            <person name="Latreille P."/>
            <person name="Wendl M.C."/>
            <person name="Yang S.-P."/>
            <person name="Pohl C."/>
            <person name="Wallis J.W."/>
            <person name="Spieth J."/>
            <person name="Bieri T.A."/>
            <person name="Berkowicz N."/>
            <person name="Nelson J.O."/>
            <person name="Osborne J."/>
            <person name="Ding L."/>
            <person name="Meyer R."/>
            <person name="Sabo A."/>
            <person name="Shotland Y."/>
            <person name="Sinha P."/>
            <person name="Wohldmann P.E."/>
            <person name="Cook L.L."/>
            <person name="Hickenbotham M.T."/>
            <person name="Eldred J."/>
            <person name="Williams D."/>
            <person name="Jones T.A."/>
            <person name="She X."/>
            <person name="Ciccarelli F.D."/>
            <person name="Izaurralde E."/>
            <person name="Taylor J."/>
            <person name="Schmutz J."/>
            <person name="Myers R.M."/>
            <person name="Cox D.R."/>
            <person name="Huang X."/>
            <person name="McPherson J.D."/>
            <person name="Mardis E.R."/>
            <person name="Clifton S.W."/>
            <person name="Warren W.C."/>
            <person name="Chinwalla A.T."/>
            <person name="Eddy S.R."/>
            <person name="Marra M.A."/>
            <person name="Ovcharenko I."/>
            <person name="Furey T.S."/>
            <person name="Miller W."/>
            <person name="Eichler E.E."/>
            <person name="Bork P."/>
            <person name="Suyama M."/>
            <person name="Torrents D."/>
            <person name="Waterston R.H."/>
            <person name="Wilson R.K."/>
        </authorList>
    </citation>
    <scope>NUCLEOTIDE SEQUENCE [LARGE SCALE GENOMIC DNA]</scope>
</reference>
<reference key="5">
    <citation type="submission" date="2005-09" db="EMBL/GenBank/DDBJ databases">
        <authorList>
            <person name="Mural R.J."/>
            <person name="Istrail S."/>
            <person name="Sutton G.G."/>
            <person name="Florea L."/>
            <person name="Halpern A.L."/>
            <person name="Mobarry C.M."/>
            <person name="Lippert R."/>
            <person name="Walenz B."/>
            <person name="Shatkay H."/>
            <person name="Dew I."/>
            <person name="Miller J.R."/>
            <person name="Flanigan M.J."/>
            <person name="Edwards N.J."/>
            <person name="Bolanos R."/>
            <person name="Fasulo D."/>
            <person name="Halldorsson B.V."/>
            <person name="Hannenhalli S."/>
            <person name="Turner R."/>
            <person name="Yooseph S."/>
            <person name="Lu F."/>
            <person name="Nusskern D.R."/>
            <person name="Shue B.C."/>
            <person name="Zheng X.H."/>
            <person name="Zhong F."/>
            <person name="Delcher A.L."/>
            <person name="Huson D.H."/>
            <person name="Kravitz S.A."/>
            <person name="Mouchard L."/>
            <person name="Reinert K."/>
            <person name="Remington K.A."/>
            <person name="Clark A.G."/>
            <person name="Waterman M.S."/>
            <person name="Eichler E.E."/>
            <person name="Adams M.D."/>
            <person name="Hunkapiller M.W."/>
            <person name="Myers E.W."/>
            <person name="Venter J.C."/>
        </authorList>
    </citation>
    <scope>NUCLEOTIDE SEQUENCE [LARGE SCALE GENOMIC DNA]</scope>
    <scope>VARIANT GLN-878</scope>
</reference>
<reference key="6">
    <citation type="journal article" date="2004" name="Genome Res.">
        <title>The status, quality, and expansion of the NIH full-length cDNA project: the Mammalian Gene Collection (MGC).</title>
        <authorList>
            <consortium name="The MGC Project Team"/>
        </authorList>
    </citation>
    <scope>NUCLEOTIDE SEQUENCE [LARGE SCALE MRNA] (ISOFORM 2)</scope>
    <source>
        <tissue>Prostate</tissue>
    </source>
</reference>
<reference key="7">
    <citation type="journal article" date="1991" name="Proc. Natl. Acad. Sci. U.S.A.">
        <title>Characterization of the alpha 4 integrin gene promoter.</title>
        <authorList>
            <person name="Rosen G.D."/>
            <person name="Birkenmeier T.M."/>
            <person name="Dean D.C."/>
        </authorList>
    </citation>
    <scope>NUCLEOTIDE SEQUENCE [MRNA] OF 1-87 (ISOFORM 1)</scope>
</reference>
<reference key="8">
    <citation type="journal article" date="1987" name="Proc. Natl. Acad. Sci. U.S.A.">
        <title>The very late antigen family of heterodimers is part of a superfamily of molecules involved in adhesion and embryogenesis.</title>
        <authorList>
            <person name="Takada Y."/>
            <person name="Strominger J.L."/>
            <person name="Hemler M.E."/>
        </authorList>
    </citation>
    <scope>PROTEIN SEQUENCE OF 34-47</scope>
</reference>
<reference key="9">
    <citation type="journal article" date="1992" name="J. Biol. Chem.">
        <title>Functional and structural analysis of VLA-4 integrin alpha 4 subunit cleavage.</title>
        <authorList>
            <person name="Teixido J."/>
            <person name="Parker C.M."/>
            <person name="Kassner P.D."/>
            <person name="Hemler M.E."/>
        </authorList>
    </citation>
    <scope>PROTEIN SEQUENCE OF 592-601</scope>
    <scope>PROTEOLYTIC PROCESSING</scope>
    <scope>MUTAGENESIS OF LYS-590 AND ARG-591</scope>
</reference>
<reference key="10">
    <citation type="journal article" date="1998" name="J. Biol. Chem.">
        <title>A role of chondroitin sulfate glycosaminoglycan binding site in alpha4beta1 integrin-mediated melanoma cell adhesion.</title>
        <authorList>
            <person name="Iida J."/>
            <person name="Meijne A.M.L."/>
            <person name="Oegema T.R. Jr."/>
            <person name="Yednock T.A."/>
            <person name="Kovach N.L."/>
            <person name="Furcht L.T."/>
            <person name="McCarthy J.B."/>
        </authorList>
    </citation>
    <scope>DOMAIN</scope>
    <scope>INTERACTION WITH CSPG4</scope>
</reference>
<reference key="11">
    <citation type="journal article" date="1999" name="Nature">
        <title>Binding of paxillin to alpha4 integrins modifies integrin-dependent biological responses.</title>
        <authorList>
            <person name="Liu S."/>
            <person name="Thomas S.M."/>
            <person name="Woodside D.G."/>
            <person name="Rose D.M."/>
            <person name="Kiosses W.B."/>
            <person name="Pfaff M."/>
            <person name="Ginsberg M.H."/>
        </authorList>
    </citation>
    <scope>INTERACTION WITH PXN; LPXN AND TGFB1I1</scope>
    <scope>MUTAGENESIS OF TYR-1024</scope>
</reference>
<reference key="12">
    <citation type="journal article" date="2001" name="J. Biol. Chem.">
        <title>Phosphorylation of the integrin alpha 4 cytoplasmic domain regulates paxillin binding.</title>
        <authorList>
            <person name="Han J."/>
            <person name="Liu S."/>
            <person name="Rose D.M."/>
            <person name="Schlaepfer D.D."/>
            <person name="McDonald H."/>
            <person name="Ginsberg M.H."/>
        </authorList>
    </citation>
    <scope>PHOSPHORYLATION AT SER-1021</scope>
    <scope>MUTAGENESIS OF SER-1021</scope>
</reference>
<reference key="13">
    <citation type="journal article" date="2004" name="J. Cell Sci.">
        <title>alpha4beta1- and alpha6beta1-integrins are functional receptors for midkine, a heparin-binding growth factor.</title>
        <authorList>
            <person name="Muramatsu H."/>
            <person name="Zou P."/>
            <person name="Suzuki H."/>
            <person name="Oda Y."/>
            <person name="Chen G.Y."/>
            <person name="Sakaguchi N."/>
            <person name="Sakuma S."/>
            <person name="Maeda N."/>
            <person name="Noda M."/>
            <person name="Takada Y."/>
            <person name="Muramatsu T."/>
        </authorList>
    </citation>
    <scope>INTERACTION WITH MDK</scope>
</reference>
<reference key="14">
    <citation type="journal article" date="2007" name="Blood">
        <title>Endothelial Lu/BCAM glycoproteins are novel ligands for red blood cell alpha4beta1 integrin: role in adhesion of sickle red blood cells to endothelial cells.</title>
        <authorList>
            <person name="El Nemer W."/>
            <person name="Wautier M.P."/>
            <person name="Rahuel C."/>
            <person name="Gane P."/>
            <person name="Hermand P."/>
            <person name="Galacteros F."/>
            <person name="Wautier J.L."/>
            <person name="Cartron J.P."/>
            <person name="Colin Y."/>
            <person name="Le Van Kim C."/>
        </authorList>
    </citation>
    <scope>INTERACTION WITH BCAM</scope>
</reference>
<reference key="15">
    <citation type="journal article" date="2008" name="J. Biol. Chem.">
        <title>Pro-inflammatory secretory phospholipase A2 type IIA binds to integrins alphavbeta3 and alpha4beta1 and induces proliferation of monocytic cells in an integrin-dependent manner.</title>
        <authorList>
            <person name="Saegusa J."/>
            <person name="Akakura N."/>
            <person name="Wu C.Y."/>
            <person name="Hoogland C."/>
            <person name="Ma Z."/>
            <person name="Lam K.S."/>
            <person name="Liu F.T."/>
            <person name="Takada Y.K."/>
            <person name="Takada Y."/>
        </authorList>
    </citation>
    <scope>FUNCTION</scope>
    <scope>MUTAGENESIS OF THR-222 AND GLY-223</scope>
</reference>
<reference key="16">
    <citation type="journal article" date="2008" name="J. Cell Biol.">
        <title>JAM-L-mediated leukocyte adhesion to endothelial cells is regulated in cis by alpha4beta1 integrin activation.</title>
        <authorList>
            <person name="Luissint A.C."/>
            <person name="Lutz P.G."/>
            <person name="Calderwood D.A."/>
            <person name="Couraud P.O."/>
            <person name="Bourdoulous S."/>
        </authorList>
    </citation>
    <scope>FUNCTION IN LEUKOCYTE TO ENDOTHELIAL CELLS ADHESION</scope>
    <scope>INTERACTION WITH JAML</scope>
</reference>
<reference key="17">
    <citation type="journal article" date="2009" name="Nat. Biotechnol.">
        <title>Mass-spectrometric identification and relative quantification of N-linked cell surface glycoproteins.</title>
        <authorList>
            <person name="Wollscheid B."/>
            <person name="Bausch-Fluck D."/>
            <person name="Henderson C."/>
            <person name="O'Brien R."/>
            <person name="Bibel M."/>
            <person name="Schiess R."/>
            <person name="Aebersold R."/>
            <person name="Watts J.D."/>
        </authorList>
    </citation>
    <scope>GLYCOSYLATION [LARGE SCALE ANALYSIS] AT ASN-480; ASN-518; ASN-538 AND ASN-645</scope>
    <source>
        <tissue>Leukemic T-cell</tissue>
    </source>
</reference>
<reference key="18">
    <citation type="journal article" date="2009" name="Sci. Signal.">
        <title>Quantitative phosphoproteomic analysis of T cell receptor signaling reveals system-wide modulation of protein-protein interactions.</title>
        <authorList>
            <person name="Mayya V."/>
            <person name="Lundgren D.H."/>
            <person name="Hwang S.-I."/>
            <person name="Rezaul K."/>
            <person name="Wu L."/>
            <person name="Eng J.K."/>
            <person name="Rodionov V."/>
            <person name="Han D.K."/>
        </authorList>
    </citation>
    <scope>PHOSPHORYLATION [LARGE SCALE ANALYSIS] AT SER-1021</scope>
    <scope>IDENTIFICATION BY MASS SPECTROMETRY [LARGE SCALE ANALYSIS]</scope>
    <source>
        <tissue>Leukemic T-cell</tissue>
    </source>
</reference>
<reference key="19">
    <citation type="journal article" date="2012" name="J. Immunol.">
        <title>Integrins alphavbeta3 and alpha4beta1 act as coreceptors for fractalkine, and the integrin-binding defective mutant of fractalkine is an antagonist of CX3CR1.</title>
        <authorList>
            <person name="Fujita M."/>
            <person name="Takada Y.K."/>
            <person name="Takada Y."/>
        </authorList>
    </citation>
    <scope>FUNCTION</scope>
    <scope>BINDING TO CX3CL1</scope>
    <scope>IDENTIFICATION IN A COMPLEX WITH CX3CR1 AND CX3CL1</scope>
</reference>
<reference key="20">
    <citation type="journal article" date="2014" name="J. Proteomics">
        <title>An enzyme assisted RP-RPLC approach for in-depth analysis of human liver phosphoproteome.</title>
        <authorList>
            <person name="Bian Y."/>
            <person name="Song C."/>
            <person name="Cheng K."/>
            <person name="Dong M."/>
            <person name="Wang F."/>
            <person name="Huang J."/>
            <person name="Sun D."/>
            <person name="Wang L."/>
            <person name="Ye M."/>
            <person name="Zou H."/>
        </authorList>
    </citation>
    <scope>PHOSPHORYLATION [LARGE SCALE ANALYSIS] AT SER-1021</scope>
    <scope>IDENTIFICATION BY MASS SPECTROMETRY [LARGE SCALE ANALYSIS]</scope>
    <source>
        <tissue>Liver</tissue>
    </source>
</reference>
<reference key="21">
    <citation type="journal article" date="2015" name="J. Biol. Chem.">
        <title>Proinflammatory secreted phospholipase A2 type IIA (sPLA-IIA) induces integrin activation through direct binding to a newly identified binding site (site 2) in integrins alphavbeta3, alpha4beta1, and alpha5beta1.</title>
        <authorList>
            <person name="Fujita M."/>
            <person name="Zhu K."/>
            <person name="Fujita C.K."/>
            <person name="Zhao M."/>
            <person name="Lam K.S."/>
            <person name="Kurth M.J."/>
            <person name="Takada Y.K."/>
            <person name="Takada Y."/>
        </authorList>
    </citation>
    <scope>FUNCTION</scope>
</reference>
<reference key="22">
    <citation type="journal article" date="2015" name="Proteomics">
        <title>N-terminome analysis of the human mitochondrial proteome.</title>
        <authorList>
            <person name="Vaca Jacome A.S."/>
            <person name="Rabilloud T."/>
            <person name="Schaeffer-Reiss C."/>
            <person name="Rompais M."/>
            <person name="Ayoub D."/>
            <person name="Lane L."/>
            <person name="Bairoch A."/>
            <person name="Van Dorsselaer A."/>
            <person name="Carapito C."/>
        </authorList>
    </citation>
    <scope>IDENTIFICATION BY MASS SPECTROMETRY [LARGE SCALE ANALYSIS]</scope>
</reference>
<reference key="23">
    <citation type="journal article" date="2022" name="Br. J. Pharmacol.">
        <title>The integrin ligand SVEP1 regulates GPCR-mediated vasoconstriction via integrins alpha9beta1 and alpha4beta1.</title>
        <authorList>
            <person name="Morris G.E."/>
            <person name="Denniff M.J."/>
            <person name="Karamanavi E."/>
            <person name="Andrews S.A."/>
            <person name="Kostogrys R.B."/>
            <person name="Bountziouka V."/>
            <person name="Ghaderi-Najafabadi M."/>
            <person name="Shamkhi N."/>
            <person name="McConnell G."/>
            <person name="Kaiser M.A."/>
            <person name="Carleton L."/>
            <person name="Schofield C."/>
            <person name="Kessler T."/>
            <person name="Rainbow R.D."/>
            <person name="Samani N.J."/>
            <person name="Webb T.R."/>
        </authorList>
    </citation>
    <scope>FUNCTION</scope>
    <scope>INTERACTION WITH SVEP1</scope>
    <scope>TISSUE SPECIFICITY</scope>
</reference>
<reference key="24">
    <citation type="journal article" date="2023" name="Life. Sci Alliance">
        <title>The C-type lectin domain of CD62P (P-selectin) functions as an integrin ligand.</title>
        <authorList>
            <person name="Takada Y.K."/>
            <person name="Simon S.I."/>
            <person name="Takada Y."/>
        </authorList>
    </citation>
    <scope>INTERACTION WITH SELP</scope>
</reference>
<proteinExistence type="evidence at protein level"/>
<protein>
    <recommendedName>
        <fullName>Integrin alpha-4</fullName>
    </recommendedName>
    <alternativeName>
        <fullName>CD49 antigen-like family member D</fullName>
    </alternativeName>
    <alternativeName>
        <fullName>Integrin alpha-IV</fullName>
    </alternativeName>
    <alternativeName>
        <fullName>VLA-4 subunit alpha</fullName>
    </alternativeName>
    <cdAntigenName>CD49d</cdAntigenName>
</protein>
<dbReference type="EMBL" id="X16983">
    <property type="protein sequence ID" value="CAA34852.1"/>
    <property type="status" value="ALT_FRAME"/>
    <property type="molecule type" value="mRNA"/>
</dbReference>
<dbReference type="EMBL" id="L12002">
    <property type="protein sequence ID" value="AAB59613.1"/>
    <property type="status" value="ALT_FRAME"/>
    <property type="molecule type" value="mRNA"/>
</dbReference>
<dbReference type="EMBL" id="AC020595">
    <property type="status" value="NOT_ANNOTATED_CDS"/>
    <property type="molecule type" value="Genomic_DNA"/>
</dbReference>
<dbReference type="EMBL" id="CH471058">
    <property type="protein sequence ID" value="EAX10985.1"/>
    <property type="molecule type" value="Genomic_DNA"/>
</dbReference>
<dbReference type="EMBL" id="CH471058">
    <property type="protein sequence ID" value="EAX10987.1"/>
    <property type="molecule type" value="Genomic_DNA"/>
</dbReference>
<dbReference type="EMBL" id="BC055419">
    <property type="protein sequence ID" value="AAH55419.1"/>
    <property type="molecule type" value="mRNA"/>
</dbReference>
<dbReference type="CCDS" id="CCDS42788.1">
    <molecule id="P13612-1"/>
</dbReference>
<dbReference type="CCDS" id="CCDS82540.1">
    <molecule id="P13612-2"/>
</dbReference>
<dbReference type="PIR" id="S06046">
    <property type="entry name" value="S06046"/>
</dbReference>
<dbReference type="RefSeq" id="NP_000876.3">
    <molecule id="P13612-1"/>
    <property type="nucleotide sequence ID" value="NM_000885.6"/>
</dbReference>
<dbReference type="RefSeq" id="NP_001303241.1">
    <molecule id="P13612-2"/>
    <property type="nucleotide sequence ID" value="NM_001316312.2"/>
</dbReference>
<dbReference type="PDB" id="3V4P">
    <property type="method" value="X-ray"/>
    <property type="resolution" value="3.15 A"/>
    <property type="chains" value="A/C=34-620"/>
</dbReference>
<dbReference type="PDB" id="3V4V">
    <property type="method" value="X-ray"/>
    <property type="resolution" value="3.10 A"/>
    <property type="chains" value="A/C=34-620"/>
</dbReference>
<dbReference type="PDB" id="4HKC">
    <property type="method" value="X-ray"/>
    <property type="resolution" value="2.20 A"/>
    <property type="chains" value="B=1003-1032"/>
</dbReference>
<dbReference type="PDB" id="5C7Z">
    <property type="method" value="X-ray"/>
    <property type="resolution" value="2.77 A"/>
    <property type="chains" value="B=1008-1015"/>
</dbReference>
<dbReference type="PDB" id="5FPI">
    <property type="method" value="X-ray"/>
    <property type="resolution" value="2.77 A"/>
    <property type="chains" value="B=1008-1015"/>
</dbReference>
<dbReference type="PDBsum" id="3V4P"/>
<dbReference type="PDBsum" id="3V4V"/>
<dbReference type="PDBsum" id="4HKC"/>
<dbReference type="PDBsum" id="5C7Z"/>
<dbReference type="PDBsum" id="5FPI"/>
<dbReference type="BMRB" id="P13612"/>
<dbReference type="EMDB" id="EMD-42607"/>
<dbReference type="SMR" id="P13612"/>
<dbReference type="BioGRID" id="109883">
    <property type="interactions" value="538"/>
</dbReference>
<dbReference type="ComplexPortal" id="CPX-1802">
    <property type="entry name" value="Integrin alpha4-beta1 complex"/>
</dbReference>
<dbReference type="ComplexPortal" id="CPX-1823">
    <property type="entry name" value="Integrin alpha4-beta7 complex"/>
</dbReference>
<dbReference type="CORUM" id="P13612"/>
<dbReference type="DIP" id="DIP-34971N"/>
<dbReference type="FunCoup" id="P13612">
    <property type="interactions" value="1200"/>
</dbReference>
<dbReference type="IntAct" id="P13612">
    <property type="interactions" value="45"/>
</dbReference>
<dbReference type="STRING" id="9606.ENSP00000380227"/>
<dbReference type="BindingDB" id="P13612"/>
<dbReference type="ChEMBL" id="CHEMBL278"/>
<dbReference type="DrugBank" id="DB04997">
    <property type="generic name" value="ATL1102"/>
</dbReference>
<dbReference type="DrugBank" id="DB05092">
    <property type="generic name" value="CDP323"/>
</dbReference>
<dbReference type="DrugBank" id="DB02530">
    <property type="generic name" value="gamma-Aminobutyric acid"/>
</dbReference>
<dbReference type="DrugBank" id="DB15791">
    <property type="generic name" value="MK-0668"/>
</dbReference>
<dbReference type="DrugBank" id="DB00108">
    <property type="generic name" value="Natalizumab"/>
</dbReference>
<dbReference type="DrugBank" id="DB05122">
    <property type="generic name" value="R1295"/>
</dbReference>
<dbReference type="DrugBank" id="DB05468">
    <property type="generic name" value="R411"/>
</dbReference>
<dbReference type="DrugBank" id="DB06822">
    <property type="generic name" value="Tinzaparin"/>
</dbReference>
<dbReference type="DrugBank" id="DB09033">
    <property type="generic name" value="Vedolizumab"/>
</dbReference>
<dbReference type="DrugCentral" id="P13612"/>
<dbReference type="GuidetoPHARMACOLOGY" id="2443"/>
<dbReference type="GlyCosmos" id="P13612">
    <property type="glycosylation" value="11 sites, No reported glycans"/>
</dbReference>
<dbReference type="GlyGen" id="P13612">
    <property type="glycosylation" value="13 sites, 24 N-linked glycans (9 sites)"/>
</dbReference>
<dbReference type="iPTMnet" id="P13612"/>
<dbReference type="PhosphoSitePlus" id="P13612"/>
<dbReference type="BioMuta" id="ITGA4"/>
<dbReference type="DMDM" id="311033436"/>
<dbReference type="jPOST" id="P13612"/>
<dbReference type="MassIVE" id="P13612"/>
<dbReference type="PaxDb" id="9606-ENSP00000380227"/>
<dbReference type="PeptideAtlas" id="P13612"/>
<dbReference type="ProteomicsDB" id="52943">
    <molecule id="P13612-1"/>
</dbReference>
<dbReference type="ProteomicsDB" id="69208"/>
<dbReference type="Pumba" id="P13612"/>
<dbReference type="ABCD" id="P13612">
    <property type="antibodies" value="23 sequenced antibodies"/>
</dbReference>
<dbReference type="Antibodypedia" id="10886">
    <property type="antibodies" value="2095 antibodies from 51 providers"/>
</dbReference>
<dbReference type="DNASU" id="3676"/>
<dbReference type="Ensembl" id="ENST00000339307.8">
    <molecule id="P13612-2"/>
    <property type="protein sequence ID" value="ENSP00000340149.4"/>
    <property type="gene ID" value="ENSG00000115232.14"/>
</dbReference>
<dbReference type="Ensembl" id="ENST00000397033.7">
    <molecule id="P13612-1"/>
    <property type="protein sequence ID" value="ENSP00000380227.2"/>
    <property type="gene ID" value="ENSG00000115232.14"/>
</dbReference>
<dbReference type="GeneID" id="3676"/>
<dbReference type="KEGG" id="hsa:3676"/>
<dbReference type="MANE-Select" id="ENST00000397033.7">
    <property type="protein sequence ID" value="ENSP00000380227.2"/>
    <property type="RefSeq nucleotide sequence ID" value="NM_000885.6"/>
    <property type="RefSeq protein sequence ID" value="NP_000876.3"/>
</dbReference>
<dbReference type="UCSC" id="uc002unu.4">
    <molecule id="P13612-1"/>
    <property type="organism name" value="human"/>
</dbReference>
<dbReference type="AGR" id="HGNC:6140"/>
<dbReference type="CTD" id="3676"/>
<dbReference type="DisGeNET" id="3676"/>
<dbReference type="GeneCards" id="ITGA4"/>
<dbReference type="HGNC" id="HGNC:6140">
    <property type="gene designation" value="ITGA4"/>
</dbReference>
<dbReference type="HPA" id="ENSG00000115232">
    <property type="expression patterns" value="Group enriched (bone marrow, lymphoid tissue)"/>
</dbReference>
<dbReference type="MalaCards" id="ITGA4"/>
<dbReference type="MIM" id="192975">
    <property type="type" value="gene"/>
</dbReference>
<dbReference type="neXtProt" id="NX_P13612"/>
<dbReference type="OpenTargets" id="ENSG00000115232"/>
<dbReference type="PharmGKB" id="PA29940"/>
<dbReference type="VEuPathDB" id="HostDB:ENSG00000115232"/>
<dbReference type="eggNOG" id="KOG3637">
    <property type="taxonomic scope" value="Eukaryota"/>
</dbReference>
<dbReference type="GeneTree" id="ENSGT00940000158443"/>
<dbReference type="HOGENOM" id="CLU_1639373_0_0_1"/>
<dbReference type="InParanoid" id="P13612"/>
<dbReference type="OMA" id="AGHHNTI"/>
<dbReference type="OrthoDB" id="5317514at2759"/>
<dbReference type="PAN-GO" id="P13612">
    <property type="GO annotations" value="8 GO annotations based on evolutionary models"/>
</dbReference>
<dbReference type="PhylomeDB" id="P13612"/>
<dbReference type="TreeFam" id="TF105391"/>
<dbReference type="PathwayCommons" id="P13612"/>
<dbReference type="Reactome" id="R-HSA-198933">
    <property type="pathway name" value="Immunoregulatory interactions between a Lymphoid and a non-Lymphoid cell"/>
</dbReference>
<dbReference type="Reactome" id="R-HSA-202733">
    <property type="pathway name" value="Cell surface interactions at the vascular wall"/>
</dbReference>
<dbReference type="Reactome" id="R-HSA-216083">
    <property type="pathway name" value="Integrin cell surface interactions"/>
</dbReference>
<dbReference type="Reactome" id="R-HSA-8949275">
    <property type="pathway name" value="RUNX3 Regulates Immune Response and Cell Migration"/>
</dbReference>
<dbReference type="Reactome" id="R-HSA-9679191">
    <property type="pathway name" value="Potential therapeutics for SARS"/>
</dbReference>
<dbReference type="SignaLink" id="P13612"/>
<dbReference type="SIGNOR" id="P13612"/>
<dbReference type="BioGRID-ORCS" id="3676">
    <property type="hits" value="30 hits in 1162 CRISPR screens"/>
</dbReference>
<dbReference type="ChiTaRS" id="ITGA4">
    <property type="organism name" value="human"/>
</dbReference>
<dbReference type="EvolutionaryTrace" id="P13612"/>
<dbReference type="GeneWiki" id="CD49d"/>
<dbReference type="GenomeRNAi" id="3676"/>
<dbReference type="Pharos" id="P13612">
    <property type="development level" value="Tclin"/>
</dbReference>
<dbReference type="PRO" id="PR:P13612"/>
<dbReference type="Proteomes" id="UP000005640">
    <property type="component" value="Chromosome 2"/>
</dbReference>
<dbReference type="RNAct" id="P13612">
    <property type="molecule type" value="protein"/>
</dbReference>
<dbReference type="Bgee" id="ENSG00000115232">
    <property type="expression patterns" value="Expressed in monocyte and 143 other cell types or tissues"/>
</dbReference>
<dbReference type="ExpressionAtlas" id="P13612">
    <property type="expression patterns" value="baseline and differential"/>
</dbReference>
<dbReference type="GO" id="GO:0009986">
    <property type="term" value="C:cell surface"/>
    <property type="evidence" value="ECO:0000314"/>
    <property type="project" value="UniProtKB"/>
</dbReference>
<dbReference type="GO" id="GO:0009897">
    <property type="term" value="C:external side of plasma membrane"/>
    <property type="evidence" value="ECO:0000318"/>
    <property type="project" value="GO_Central"/>
</dbReference>
<dbReference type="GO" id="GO:0070062">
    <property type="term" value="C:extracellular exosome"/>
    <property type="evidence" value="ECO:0007005"/>
    <property type="project" value="UniProtKB"/>
</dbReference>
<dbReference type="GO" id="GO:0005925">
    <property type="term" value="C:focal adhesion"/>
    <property type="evidence" value="ECO:0007005"/>
    <property type="project" value="UniProtKB"/>
</dbReference>
<dbReference type="GO" id="GO:0030426">
    <property type="term" value="C:growth cone"/>
    <property type="evidence" value="ECO:0007669"/>
    <property type="project" value="Ensembl"/>
</dbReference>
<dbReference type="GO" id="GO:0034668">
    <property type="term" value="C:integrin alpha4-beta1 complex"/>
    <property type="evidence" value="ECO:0000353"/>
    <property type="project" value="ComplexPortal"/>
</dbReference>
<dbReference type="GO" id="GO:0034669">
    <property type="term" value="C:integrin alpha4-beta7 complex"/>
    <property type="evidence" value="ECO:0000314"/>
    <property type="project" value="UniProtKB"/>
</dbReference>
<dbReference type="GO" id="GO:0008305">
    <property type="term" value="C:integrin complex"/>
    <property type="evidence" value="ECO:0000318"/>
    <property type="project" value="GO_Central"/>
</dbReference>
<dbReference type="GO" id="GO:0016020">
    <property type="term" value="C:membrane"/>
    <property type="evidence" value="ECO:0007005"/>
    <property type="project" value="UniProtKB"/>
</dbReference>
<dbReference type="GO" id="GO:0043025">
    <property type="term" value="C:neuronal cell body"/>
    <property type="evidence" value="ECO:0007669"/>
    <property type="project" value="Ensembl"/>
</dbReference>
<dbReference type="GO" id="GO:0005886">
    <property type="term" value="C:plasma membrane"/>
    <property type="evidence" value="ECO:0000314"/>
    <property type="project" value="UniProtKB"/>
</dbReference>
<dbReference type="GO" id="GO:0050839">
    <property type="term" value="F:cell adhesion molecule binding"/>
    <property type="evidence" value="ECO:0000315"/>
    <property type="project" value="UniProtKB"/>
</dbReference>
<dbReference type="GO" id="GO:0015026">
    <property type="term" value="F:coreceptor activity"/>
    <property type="evidence" value="ECO:0000304"/>
    <property type="project" value="UniProtKB"/>
</dbReference>
<dbReference type="GO" id="GO:0001968">
    <property type="term" value="F:fibronectin binding"/>
    <property type="evidence" value="ECO:0007669"/>
    <property type="project" value="Ensembl"/>
</dbReference>
<dbReference type="GO" id="GO:0005178">
    <property type="term" value="F:integrin binding"/>
    <property type="evidence" value="ECO:0000318"/>
    <property type="project" value="GO_Central"/>
</dbReference>
<dbReference type="GO" id="GO:0046872">
    <property type="term" value="F:metal ion binding"/>
    <property type="evidence" value="ECO:0007669"/>
    <property type="project" value="UniProtKB-KW"/>
</dbReference>
<dbReference type="GO" id="GO:1990405">
    <property type="term" value="F:protein antigen binding"/>
    <property type="evidence" value="ECO:0007669"/>
    <property type="project" value="Ensembl"/>
</dbReference>
<dbReference type="GO" id="GO:0060385">
    <property type="term" value="P:axonogenesis involved in innervation"/>
    <property type="evidence" value="ECO:0007669"/>
    <property type="project" value="Ensembl"/>
</dbReference>
<dbReference type="GO" id="GO:0030183">
    <property type="term" value="P:B cell differentiation"/>
    <property type="evidence" value="ECO:0000305"/>
    <property type="project" value="BHF-UCL"/>
</dbReference>
<dbReference type="GO" id="GO:0033627">
    <property type="term" value="P:cell adhesion mediated by integrin"/>
    <property type="evidence" value="ECO:0000318"/>
    <property type="project" value="GO_Central"/>
</dbReference>
<dbReference type="GO" id="GO:0098609">
    <property type="term" value="P:cell-cell adhesion"/>
    <property type="evidence" value="ECO:0000318"/>
    <property type="project" value="GO_Central"/>
</dbReference>
<dbReference type="GO" id="GO:0033631">
    <property type="term" value="P:cell-cell adhesion mediated by integrin"/>
    <property type="evidence" value="ECO:0000316"/>
    <property type="project" value="ARUK-UCL"/>
</dbReference>
<dbReference type="GO" id="GO:0007160">
    <property type="term" value="P:cell-matrix adhesion"/>
    <property type="evidence" value="ECO:0000314"/>
    <property type="project" value="ComplexPortal"/>
</dbReference>
<dbReference type="GO" id="GO:0003366">
    <property type="term" value="P:cell-matrix adhesion involved in ameboidal cell migration"/>
    <property type="evidence" value="ECO:0000315"/>
    <property type="project" value="UniProtKB"/>
</dbReference>
<dbReference type="GO" id="GO:1904646">
    <property type="term" value="P:cellular response to amyloid-beta"/>
    <property type="evidence" value="ECO:0000316"/>
    <property type="project" value="ARUK-UCL"/>
</dbReference>
<dbReference type="GO" id="GO:0071345">
    <property type="term" value="P:cellular response to cytokine stimulus"/>
    <property type="evidence" value="ECO:0007669"/>
    <property type="project" value="Ensembl"/>
</dbReference>
<dbReference type="GO" id="GO:1990771">
    <property type="term" value="P:clathrin-dependent extracellular exosome endocytosis"/>
    <property type="evidence" value="ECO:0007669"/>
    <property type="project" value="Ensembl"/>
</dbReference>
<dbReference type="GO" id="GO:0050904">
    <property type="term" value="P:diapedesis"/>
    <property type="evidence" value="ECO:0007669"/>
    <property type="project" value="Ensembl"/>
</dbReference>
<dbReference type="GO" id="GO:0035987">
    <property type="term" value="P:endodermal cell differentiation"/>
    <property type="evidence" value="ECO:0000270"/>
    <property type="project" value="UniProtKB"/>
</dbReference>
<dbReference type="GO" id="GO:0034113">
    <property type="term" value="P:heterotypic cell-cell adhesion"/>
    <property type="evidence" value="ECO:0000315"/>
    <property type="project" value="UniProtKB"/>
</dbReference>
<dbReference type="GO" id="GO:0002387">
    <property type="term" value="P:immune response in gut-associated lymphoid tissue"/>
    <property type="evidence" value="ECO:0000303"/>
    <property type="project" value="ComplexPortal"/>
</dbReference>
<dbReference type="GO" id="GO:0007229">
    <property type="term" value="P:integrin-mediated signaling pathway"/>
    <property type="evidence" value="ECO:0000318"/>
    <property type="project" value="GO_Central"/>
</dbReference>
<dbReference type="GO" id="GO:0007159">
    <property type="term" value="P:leukocyte cell-cell adhesion"/>
    <property type="evidence" value="ECO:0000314"/>
    <property type="project" value="BHF-UCL"/>
</dbReference>
<dbReference type="GO" id="GO:0050901">
    <property type="term" value="P:leukocyte tethering or rolling"/>
    <property type="evidence" value="ECO:0000315"/>
    <property type="project" value="UniProtKB"/>
</dbReference>
<dbReference type="GO" id="GO:0090074">
    <property type="term" value="P:negative regulation of protein homodimerization activity"/>
    <property type="evidence" value="ECO:0000314"/>
    <property type="project" value="UniProtKB"/>
</dbReference>
<dbReference type="GO" id="GO:0045906">
    <property type="term" value="P:negative regulation of vasoconstriction"/>
    <property type="evidence" value="ECO:0000315"/>
    <property type="project" value="UniProtKB"/>
</dbReference>
<dbReference type="GO" id="GO:1990138">
    <property type="term" value="P:neuron projection extension"/>
    <property type="evidence" value="ECO:0007669"/>
    <property type="project" value="Ensembl"/>
</dbReference>
<dbReference type="GO" id="GO:2000353">
    <property type="term" value="P:positive regulation of endothelial cell apoptotic process"/>
    <property type="evidence" value="ECO:0000315"/>
    <property type="project" value="BHF-UCL"/>
</dbReference>
<dbReference type="GO" id="GO:1903238">
    <property type="term" value="P:positive regulation of leukocyte tethering or rolling"/>
    <property type="evidence" value="ECO:0007669"/>
    <property type="project" value="Ensembl"/>
</dbReference>
<dbReference type="GO" id="GO:2000406">
    <property type="term" value="P:positive regulation of T cell migration"/>
    <property type="evidence" value="ECO:0007669"/>
    <property type="project" value="Ensembl"/>
</dbReference>
<dbReference type="GO" id="GO:1905564">
    <property type="term" value="P:positive regulation of vascular endothelial cell proliferation"/>
    <property type="evidence" value="ECO:0000315"/>
    <property type="project" value="BHF-UCL"/>
</dbReference>
<dbReference type="GO" id="GO:0043113">
    <property type="term" value="P:receptor clustering"/>
    <property type="evidence" value="ECO:0000315"/>
    <property type="project" value="UniProtKB"/>
</dbReference>
<dbReference type="GO" id="GO:0034446">
    <property type="term" value="P:substrate adhesion-dependent cell spreading"/>
    <property type="evidence" value="ECO:0000315"/>
    <property type="project" value="UniProtKB"/>
</dbReference>
<dbReference type="FunFam" id="2.60.40.1460:FF:000009">
    <property type="entry name" value="Integrin alpha 4"/>
    <property type="match status" value="1"/>
</dbReference>
<dbReference type="FunFam" id="2.60.40.1530:FF:000013">
    <property type="entry name" value="Integrin alpha 4"/>
    <property type="match status" value="1"/>
</dbReference>
<dbReference type="FunFam" id="2.60.40.1510:FF:000019">
    <property type="entry name" value="Integrin subunit alpha 4"/>
    <property type="match status" value="1"/>
</dbReference>
<dbReference type="FunFam" id="2.130.10.130:FF:000006">
    <property type="entry name" value="Integrin, alpha 9"/>
    <property type="match status" value="1"/>
</dbReference>
<dbReference type="Gene3D" id="1.20.5.930">
    <property type="entry name" value="Bicelle-embedded integrin alpha(iib) transmembrane segment"/>
    <property type="match status" value="1"/>
</dbReference>
<dbReference type="Gene3D" id="2.130.10.130">
    <property type="entry name" value="Integrin alpha, N-terminal"/>
    <property type="match status" value="1"/>
</dbReference>
<dbReference type="Gene3D" id="2.60.40.1460">
    <property type="entry name" value="Integrin domains. Chain A, domain 2"/>
    <property type="match status" value="1"/>
</dbReference>
<dbReference type="Gene3D" id="2.60.40.1510">
    <property type="entry name" value="ntegrin, alpha v. Chain A, domain 3"/>
    <property type="match status" value="1"/>
</dbReference>
<dbReference type="Gene3D" id="2.60.40.1530">
    <property type="entry name" value="ntegrin, alpha v. Chain A, domain 4"/>
    <property type="match status" value="1"/>
</dbReference>
<dbReference type="IDEAL" id="IID00615"/>
<dbReference type="InterPro" id="IPR013517">
    <property type="entry name" value="FG-GAP"/>
</dbReference>
<dbReference type="InterPro" id="IPR013519">
    <property type="entry name" value="Int_alpha_beta-p"/>
</dbReference>
<dbReference type="InterPro" id="IPR000413">
    <property type="entry name" value="Integrin_alpha"/>
</dbReference>
<dbReference type="InterPro" id="IPR018184">
    <property type="entry name" value="Integrin_alpha_C_CS"/>
</dbReference>
<dbReference type="InterPro" id="IPR013649">
    <property type="entry name" value="Integrin_alpha_Ig-like_1"/>
</dbReference>
<dbReference type="InterPro" id="IPR048285">
    <property type="entry name" value="Integrin_alpha_Ig-like_2"/>
</dbReference>
<dbReference type="InterPro" id="IPR048286">
    <property type="entry name" value="Integrin_alpha_Ig-like_3"/>
</dbReference>
<dbReference type="InterPro" id="IPR028994">
    <property type="entry name" value="Integrin_alpha_N"/>
</dbReference>
<dbReference type="InterPro" id="IPR032695">
    <property type="entry name" value="Integrin_dom_sf"/>
</dbReference>
<dbReference type="PANTHER" id="PTHR23220">
    <property type="entry name" value="INTEGRIN ALPHA"/>
    <property type="match status" value="1"/>
</dbReference>
<dbReference type="PANTHER" id="PTHR23220:SF78">
    <property type="entry name" value="INTEGRIN ALPHA-4"/>
    <property type="match status" value="1"/>
</dbReference>
<dbReference type="Pfam" id="PF01839">
    <property type="entry name" value="FG-GAP"/>
    <property type="match status" value="2"/>
</dbReference>
<dbReference type="Pfam" id="PF08441">
    <property type="entry name" value="Integrin_A_Ig_1"/>
    <property type="match status" value="1"/>
</dbReference>
<dbReference type="Pfam" id="PF20805">
    <property type="entry name" value="Integrin_A_Ig_2"/>
    <property type="match status" value="1"/>
</dbReference>
<dbReference type="Pfam" id="PF20806">
    <property type="entry name" value="Integrin_A_Ig_3"/>
    <property type="match status" value="1"/>
</dbReference>
<dbReference type="PRINTS" id="PR01185">
    <property type="entry name" value="INTEGRINA"/>
</dbReference>
<dbReference type="SMART" id="SM00191">
    <property type="entry name" value="Int_alpha"/>
    <property type="match status" value="5"/>
</dbReference>
<dbReference type="SUPFAM" id="SSF69318">
    <property type="entry name" value="Integrin alpha N-terminal domain"/>
    <property type="match status" value="1"/>
</dbReference>
<dbReference type="SUPFAM" id="SSF69179">
    <property type="entry name" value="Integrin domains"/>
    <property type="match status" value="3"/>
</dbReference>
<dbReference type="PROSITE" id="PS51470">
    <property type="entry name" value="FG_GAP"/>
    <property type="match status" value="7"/>
</dbReference>
<dbReference type="PROSITE" id="PS00242">
    <property type="entry name" value="INTEGRIN_ALPHA"/>
    <property type="match status" value="1"/>
</dbReference>
<sequence length="1032" mass="114900">MAWEARREPGPRRAAVRETVMLLLCLGVPTGRPYNVDTESALLYQGPHNTLFGYSVVLHSHGANRWLLVGAPTANWLANASVINPGAIYRCRIGKNPGQTCEQLQLGSPNGEPCGKTCLEERDNQWLGVTLSRQPGENGSIVTCGHRWKNIFYIKNENKLPTGGCYGVPPDLRTELSKRIAPCYQDYVKKFGENFASCQAGISSFYTKDLIVMGAPGSSYWTGSLFVYNITTNKYKAFLDKQNQVKFGSYLGYSVGAGHFRSQHTTEVVGGAPQHEQIGKAYIFSIDEKELNILHEMKGKKLGSYFGASVCAVDLNADGFSDLLVGAPMQSTIREEGRVFVYINSGSGAVMNAMETNLVGSDKYAARFGESIVNLGDIDNDGFEDVAIGAPQEDDLQGAIYIYNGRADGISSTFSQRIEGLQISKSLSMFGQSISGQIDADNNGYVDVAVGAFRSDSAVLLRTRPVVIVDASLSHPESVNRTKFDCVENGWPSVCIDLTLCFSYKGKEVPGYIVLFYNMSLDVNRKAESPPRFYFSSNGTSDVITGSIQVSSREANCRTHQAFMRKDVRDILTPIQIEAAYHLGPHVISKRSTEEFPPLQPILQQKKEKDIMKKTINFARFCAHENCSADLQVSAKIGFLKPHENKTYLAVGSMKTLMLNVSLFNAGDDAYETTLHVKLPVGLYFIKILELEEKQINCEVTDNSGVVQLDCSIGYIYVDHLSRIDISFLLDVSSLSRAEEDLSITVHATCENEEEMDNLKHSRVTVAIPLKYEVKLTVHGFVNPTSFVYGSNDENEPETCMVEKMNLTFHVINTGNSMAPNVSVEIMVPNSFSPQTDKLFNILDVQTTTGECHFENYQRVCALEQQKSAMQTLKGIVRFLSKTDKRLLYCIKADPHCLNFLCNFGKMESGKEASVHIQLEGRPSILEMDETSALKFEIRATGFPEPNPRVIELNKDENVAHVLLEGLHHQRPKRYFTIVIISSSLLLGLIVLLLISYVMWKAGFFKRQYKSILQEENRRDSWSYINSKSNDD</sequence>
<organism>
    <name type="scientific">Homo sapiens</name>
    <name type="common">Human</name>
    <dbReference type="NCBI Taxonomy" id="9606"/>
    <lineage>
        <taxon>Eukaryota</taxon>
        <taxon>Metazoa</taxon>
        <taxon>Chordata</taxon>
        <taxon>Craniata</taxon>
        <taxon>Vertebrata</taxon>
        <taxon>Euteleostomi</taxon>
        <taxon>Mammalia</taxon>
        <taxon>Eutheria</taxon>
        <taxon>Euarchontoglires</taxon>
        <taxon>Primates</taxon>
        <taxon>Haplorrhini</taxon>
        <taxon>Catarrhini</taxon>
        <taxon>Hominidae</taxon>
        <taxon>Homo</taxon>
    </lineage>
</organism>